<name>URE2_MARMS</name>
<comment type="catalytic activity">
    <reaction evidence="1">
        <text>urea + 2 H2O + H(+) = hydrogencarbonate + 2 NH4(+)</text>
        <dbReference type="Rhea" id="RHEA:20557"/>
        <dbReference type="ChEBI" id="CHEBI:15377"/>
        <dbReference type="ChEBI" id="CHEBI:15378"/>
        <dbReference type="ChEBI" id="CHEBI:16199"/>
        <dbReference type="ChEBI" id="CHEBI:17544"/>
        <dbReference type="ChEBI" id="CHEBI:28938"/>
        <dbReference type="EC" id="3.5.1.5"/>
    </reaction>
</comment>
<comment type="pathway">
    <text evidence="1">Nitrogen metabolism; urea degradation; CO(2) and NH(3) from urea (urease route): step 1/1.</text>
</comment>
<comment type="subunit">
    <text evidence="1">Heterotrimer of UreA (gamma), UreB (beta) and UreC (alpha) subunits. Three heterotrimers associate to form the active enzyme.</text>
</comment>
<comment type="subcellular location">
    <subcellularLocation>
        <location evidence="1">Cytoplasm</location>
    </subcellularLocation>
</comment>
<comment type="similarity">
    <text evidence="1">Belongs to the urease beta subunit family.</text>
</comment>
<dbReference type="EC" id="3.5.1.5" evidence="1"/>
<dbReference type="EMBL" id="CP000749">
    <property type="protein sequence ID" value="ABR69886.1"/>
    <property type="molecule type" value="Genomic_DNA"/>
</dbReference>
<dbReference type="SMR" id="A6VTV7"/>
<dbReference type="STRING" id="400668.Mmwyl1_0955"/>
<dbReference type="KEGG" id="mmw:Mmwyl1_0955"/>
<dbReference type="eggNOG" id="COG0832">
    <property type="taxonomic scope" value="Bacteria"/>
</dbReference>
<dbReference type="HOGENOM" id="CLU_129707_1_1_6"/>
<dbReference type="OrthoDB" id="9797217at2"/>
<dbReference type="UniPathway" id="UPA00258">
    <property type="reaction ID" value="UER00370"/>
</dbReference>
<dbReference type="GO" id="GO:0035550">
    <property type="term" value="C:urease complex"/>
    <property type="evidence" value="ECO:0007669"/>
    <property type="project" value="InterPro"/>
</dbReference>
<dbReference type="GO" id="GO:0009039">
    <property type="term" value="F:urease activity"/>
    <property type="evidence" value="ECO:0007669"/>
    <property type="project" value="UniProtKB-UniRule"/>
</dbReference>
<dbReference type="GO" id="GO:0043419">
    <property type="term" value="P:urea catabolic process"/>
    <property type="evidence" value="ECO:0007669"/>
    <property type="project" value="UniProtKB-UniRule"/>
</dbReference>
<dbReference type="CDD" id="cd00407">
    <property type="entry name" value="Urease_beta"/>
    <property type="match status" value="1"/>
</dbReference>
<dbReference type="FunFam" id="2.10.150.10:FF:000001">
    <property type="entry name" value="Urease subunit beta"/>
    <property type="match status" value="1"/>
</dbReference>
<dbReference type="Gene3D" id="2.10.150.10">
    <property type="entry name" value="Urease, beta subunit"/>
    <property type="match status" value="1"/>
</dbReference>
<dbReference type="HAMAP" id="MF_01954">
    <property type="entry name" value="Urease_beta"/>
    <property type="match status" value="1"/>
</dbReference>
<dbReference type="InterPro" id="IPR002019">
    <property type="entry name" value="Urease_beta-like"/>
</dbReference>
<dbReference type="InterPro" id="IPR036461">
    <property type="entry name" value="Urease_betasu_sf"/>
</dbReference>
<dbReference type="InterPro" id="IPR050069">
    <property type="entry name" value="Urease_subunit"/>
</dbReference>
<dbReference type="NCBIfam" id="NF009682">
    <property type="entry name" value="PRK13203.1"/>
    <property type="match status" value="1"/>
</dbReference>
<dbReference type="NCBIfam" id="TIGR00192">
    <property type="entry name" value="urease_beta"/>
    <property type="match status" value="1"/>
</dbReference>
<dbReference type="PANTHER" id="PTHR33569">
    <property type="entry name" value="UREASE"/>
    <property type="match status" value="1"/>
</dbReference>
<dbReference type="PANTHER" id="PTHR33569:SF1">
    <property type="entry name" value="UREASE"/>
    <property type="match status" value="1"/>
</dbReference>
<dbReference type="Pfam" id="PF00699">
    <property type="entry name" value="Urease_beta"/>
    <property type="match status" value="1"/>
</dbReference>
<dbReference type="SUPFAM" id="SSF51278">
    <property type="entry name" value="Urease, beta-subunit"/>
    <property type="match status" value="1"/>
</dbReference>
<proteinExistence type="inferred from homology"/>
<protein>
    <recommendedName>
        <fullName evidence="1">Urease subunit beta</fullName>
        <ecNumber evidence="1">3.5.1.5</ecNumber>
    </recommendedName>
    <alternativeName>
        <fullName evidence="1">Urea amidohydrolase subunit beta</fullName>
    </alternativeName>
</protein>
<keyword id="KW-0963">Cytoplasm</keyword>
<keyword id="KW-0378">Hydrolase</keyword>
<sequence length="105" mass="11596">MIPGEIQVAEGVIELNVGRKTVKIRVENTGDRPVQIGSHYHFYEVNPALSFDRELTKGFRLNIASGTAVRFEPGQGREVELVEYAGTKTIYGFRGEVMGKLVGAE</sequence>
<feature type="chain" id="PRO_1000088506" description="Urease subunit beta">
    <location>
        <begin position="1"/>
        <end position="105"/>
    </location>
</feature>
<accession>A6VTV7</accession>
<evidence type="ECO:0000255" key="1">
    <source>
        <dbReference type="HAMAP-Rule" id="MF_01954"/>
    </source>
</evidence>
<organism>
    <name type="scientific">Marinomonas sp. (strain MWYL1)</name>
    <dbReference type="NCBI Taxonomy" id="400668"/>
    <lineage>
        <taxon>Bacteria</taxon>
        <taxon>Pseudomonadati</taxon>
        <taxon>Pseudomonadota</taxon>
        <taxon>Gammaproteobacteria</taxon>
        <taxon>Oceanospirillales</taxon>
        <taxon>Oceanospirillaceae</taxon>
        <taxon>Marinomonas</taxon>
    </lineage>
</organism>
<gene>
    <name evidence="1" type="primary">ureB</name>
    <name type="ordered locus">Mmwyl1_0955</name>
</gene>
<reference key="1">
    <citation type="submission" date="2007-06" db="EMBL/GenBank/DDBJ databases">
        <title>Complete sequence of Marinomonas sp. MWYL1.</title>
        <authorList>
            <consortium name="US DOE Joint Genome Institute"/>
            <person name="Copeland A."/>
            <person name="Lucas S."/>
            <person name="Lapidus A."/>
            <person name="Barry K."/>
            <person name="Glavina del Rio T."/>
            <person name="Dalin E."/>
            <person name="Tice H."/>
            <person name="Pitluck S."/>
            <person name="Kiss H."/>
            <person name="Brettin T."/>
            <person name="Bruce D."/>
            <person name="Detter J.C."/>
            <person name="Han C."/>
            <person name="Schmutz J."/>
            <person name="Larimer F."/>
            <person name="Land M."/>
            <person name="Hauser L."/>
            <person name="Kyrpides N."/>
            <person name="Kim E."/>
            <person name="Johnston A.W.B."/>
            <person name="Todd J.D."/>
            <person name="Rogers R."/>
            <person name="Wexler M."/>
            <person name="Bond P.L."/>
            <person name="Li Y."/>
            <person name="Richardson P."/>
        </authorList>
    </citation>
    <scope>NUCLEOTIDE SEQUENCE [LARGE SCALE GENOMIC DNA]</scope>
    <source>
        <strain>MWYL1</strain>
    </source>
</reference>